<reference key="1">
    <citation type="submission" date="2007-06" db="EMBL/GenBank/DDBJ databases">
        <title>Complete sequence of Sinorhizobium medicae WSM419 chromosome.</title>
        <authorList>
            <consortium name="US DOE Joint Genome Institute"/>
            <person name="Copeland A."/>
            <person name="Lucas S."/>
            <person name="Lapidus A."/>
            <person name="Barry K."/>
            <person name="Glavina del Rio T."/>
            <person name="Dalin E."/>
            <person name="Tice H."/>
            <person name="Pitluck S."/>
            <person name="Chain P."/>
            <person name="Malfatti S."/>
            <person name="Shin M."/>
            <person name="Vergez L."/>
            <person name="Schmutz J."/>
            <person name="Larimer F."/>
            <person name="Land M."/>
            <person name="Hauser L."/>
            <person name="Kyrpides N."/>
            <person name="Mikhailova N."/>
            <person name="Reeve W.G."/>
            <person name="Richardson P."/>
        </authorList>
    </citation>
    <scope>NUCLEOTIDE SEQUENCE [LARGE SCALE GENOMIC DNA]</scope>
    <source>
        <strain>WSM419</strain>
    </source>
</reference>
<name>RS4_SINMW</name>
<accession>A6U9M8</accession>
<sequence>MSKRESSKYKIDRRMGENIWGRPKSPVNRREYGPGQHGQRRKSKLSDFGVQLRAKQKLKGYYGDIREKQFRAIFAEASRRKGDTPENLVGLLESRLDAIVYRAKFVPTVFAARQFVNHGHVKVNGVRVNIGSYRCKPGDVIEVKESSKQLVTVLEAVQLAERDVPDYIEADHNKMVATFVRVPALADVPYPVIMEPHLVVEFYSR</sequence>
<dbReference type="EMBL" id="CP000738">
    <property type="protein sequence ID" value="ABR60358.1"/>
    <property type="molecule type" value="Genomic_DNA"/>
</dbReference>
<dbReference type="RefSeq" id="WP_011975667.1">
    <property type="nucleotide sequence ID" value="NC_009636.1"/>
</dbReference>
<dbReference type="RefSeq" id="YP_001327193.1">
    <property type="nucleotide sequence ID" value="NC_009636.1"/>
</dbReference>
<dbReference type="SMR" id="A6U9M8"/>
<dbReference type="STRING" id="366394.Smed_1514"/>
<dbReference type="GeneID" id="61612747"/>
<dbReference type="KEGG" id="smd:Smed_1514"/>
<dbReference type="PATRIC" id="fig|366394.8.peg.4647"/>
<dbReference type="eggNOG" id="COG0522">
    <property type="taxonomic scope" value="Bacteria"/>
</dbReference>
<dbReference type="HOGENOM" id="CLU_092403_0_0_5"/>
<dbReference type="OrthoDB" id="9803672at2"/>
<dbReference type="Proteomes" id="UP000001108">
    <property type="component" value="Chromosome"/>
</dbReference>
<dbReference type="GO" id="GO:0015935">
    <property type="term" value="C:small ribosomal subunit"/>
    <property type="evidence" value="ECO:0007669"/>
    <property type="project" value="InterPro"/>
</dbReference>
<dbReference type="GO" id="GO:0019843">
    <property type="term" value="F:rRNA binding"/>
    <property type="evidence" value="ECO:0007669"/>
    <property type="project" value="UniProtKB-UniRule"/>
</dbReference>
<dbReference type="GO" id="GO:0003735">
    <property type="term" value="F:structural constituent of ribosome"/>
    <property type="evidence" value="ECO:0007669"/>
    <property type="project" value="InterPro"/>
</dbReference>
<dbReference type="GO" id="GO:0042274">
    <property type="term" value="P:ribosomal small subunit biogenesis"/>
    <property type="evidence" value="ECO:0007669"/>
    <property type="project" value="TreeGrafter"/>
</dbReference>
<dbReference type="GO" id="GO:0006412">
    <property type="term" value="P:translation"/>
    <property type="evidence" value="ECO:0007669"/>
    <property type="project" value="UniProtKB-UniRule"/>
</dbReference>
<dbReference type="CDD" id="cd00165">
    <property type="entry name" value="S4"/>
    <property type="match status" value="1"/>
</dbReference>
<dbReference type="FunFam" id="3.10.290.10:FF:000001">
    <property type="entry name" value="30S ribosomal protein S4"/>
    <property type="match status" value="1"/>
</dbReference>
<dbReference type="Gene3D" id="1.10.1050.10">
    <property type="entry name" value="Ribosomal Protein S4 Delta 41, Chain A, domain 1"/>
    <property type="match status" value="1"/>
</dbReference>
<dbReference type="Gene3D" id="3.10.290.10">
    <property type="entry name" value="RNA-binding S4 domain"/>
    <property type="match status" value="1"/>
</dbReference>
<dbReference type="HAMAP" id="MF_01306_B">
    <property type="entry name" value="Ribosomal_uS4_B"/>
    <property type="match status" value="1"/>
</dbReference>
<dbReference type="InterPro" id="IPR022801">
    <property type="entry name" value="Ribosomal_uS4"/>
</dbReference>
<dbReference type="InterPro" id="IPR005709">
    <property type="entry name" value="Ribosomal_uS4_bac-type"/>
</dbReference>
<dbReference type="InterPro" id="IPR018079">
    <property type="entry name" value="Ribosomal_uS4_CS"/>
</dbReference>
<dbReference type="InterPro" id="IPR001912">
    <property type="entry name" value="Ribosomal_uS4_N"/>
</dbReference>
<dbReference type="InterPro" id="IPR002942">
    <property type="entry name" value="S4_RNA-bd"/>
</dbReference>
<dbReference type="InterPro" id="IPR036986">
    <property type="entry name" value="S4_RNA-bd_sf"/>
</dbReference>
<dbReference type="NCBIfam" id="NF003717">
    <property type="entry name" value="PRK05327.1"/>
    <property type="match status" value="1"/>
</dbReference>
<dbReference type="NCBIfam" id="TIGR01017">
    <property type="entry name" value="rpsD_bact"/>
    <property type="match status" value="1"/>
</dbReference>
<dbReference type="PANTHER" id="PTHR11831">
    <property type="entry name" value="30S 40S RIBOSOMAL PROTEIN"/>
    <property type="match status" value="1"/>
</dbReference>
<dbReference type="PANTHER" id="PTHR11831:SF4">
    <property type="entry name" value="SMALL RIBOSOMAL SUBUNIT PROTEIN US4M"/>
    <property type="match status" value="1"/>
</dbReference>
<dbReference type="Pfam" id="PF00163">
    <property type="entry name" value="Ribosomal_S4"/>
    <property type="match status" value="1"/>
</dbReference>
<dbReference type="Pfam" id="PF01479">
    <property type="entry name" value="S4"/>
    <property type="match status" value="1"/>
</dbReference>
<dbReference type="SMART" id="SM01390">
    <property type="entry name" value="Ribosomal_S4"/>
    <property type="match status" value="1"/>
</dbReference>
<dbReference type="SMART" id="SM00363">
    <property type="entry name" value="S4"/>
    <property type="match status" value="1"/>
</dbReference>
<dbReference type="SUPFAM" id="SSF55174">
    <property type="entry name" value="Alpha-L RNA-binding motif"/>
    <property type="match status" value="1"/>
</dbReference>
<dbReference type="PROSITE" id="PS00632">
    <property type="entry name" value="RIBOSOMAL_S4"/>
    <property type="match status" value="1"/>
</dbReference>
<dbReference type="PROSITE" id="PS50889">
    <property type="entry name" value="S4"/>
    <property type="match status" value="1"/>
</dbReference>
<keyword id="KW-0687">Ribonucleoprotein</keyword>
<keyword id="KW-0689">Ribosomal protein</keyword>
<keyword id="KW-0694">RNA-binding</keyword>
<keyword id="KW-0699">rRNA-binding</keyword>
<proteinExistence type="inferred from homology"/>
<evidence type="ECO:0000255" key="1">
    <source>
        <dbReference type="HAMAP-Rule" id="MF_01306"/>
    </source>
</evidence>
<evidence type="ECO:0000256" key="2">
    <source>
        <dbReference type="SAM" id="MobiDB-lite"/>
    </source>
</evidence>
<evidence type="ECO:0000305" key="3"/>
<gene>
    <name evidence="1" type="primary">rpsD</name>
    <name type="ordered locus">Smed_1514</name>
</gene>
<feature type="chain" id="PRO_0000322335" description="Small ribosomal subunit protein uS4">
    <location>
        <begin position="1"/>
        <end position="205"/>
    </location>
</feature>
<feature type="domain" description="S4 RNA-binding" evidence="1">
    <location>
        <begin position="94"/>
        <end position="157"/>
    </location>
</feature>
<feature type="region of interest" description="Disordered" evidence="2">
    <location>
        <begin position="1"/>
        <end position="46"/>
    </location>
</feature>
<feature type="compositionally biased region" description="Basic and acidic residues" evidence="2">
    <location>
        <begin position="1"/>
        <end position="16"/>
    </location>
</feature>
<protein>
    <recommendedName>
        <fullName evidence="1">Small ribosomal subunit protein uS4</fullName>
    </recommendedName>
    <alternativeName>
        <fullName evidence="3">30S ribosomal protein S4</fullName>
    </alternativeName>
</protein>
<organism>
    <name type="scientific">Sinorhizobium medicae (strain WSM419)</name>
    <name type="common">Ensifer medicae</name>
    <dbReference type="NCBI Taxonomy" id="366394"/>
    <lineage>
        <taxon>Bacteria</taxon>
        <taxon>Pseudomonadati</taxon>
        <taxon>Pseudomonadota</taxon>
        <taxon>Alphaproteobacteria</taxon>
        <taxon>Hyphomicrobiales</taxon>
        <taxon>Rhizobiaceae</taxon>
        <taxon>Sinorhizobium/Ensifer group</taxon>
        <taxon>Sinorhizobium</taxon>
    </lineage>
</organism>
<comment type="function">
    <text evidence="1">One of the primary rRNA binding proteins, it binds directly to 16S rRNA where it nucleates assembly of the body of the 30S subunit.</text>
</comment>
<comment type="function">
    <text evidence="1">With S5 and S12 plays an important role in translational accuracy.</text>
</comment>
<comment type="subunit">
    <text evidence="1">Part of the 30S ribosomal subunit. Contacts protein S5. The interaction surface between S4 and S5 is involved in control of translational fidelity.</text>
</comment>
<comment type="similarity">
    <text evidence="1">Belongs to the universal ribosomal protein uS4 family.</text>
</comment>